<protein>
    <recommendedName>
        <fullName evidence="1">Small ribosomal subunit biogenesis GTPase RsgA</fullName>
        <ecNumber evidence="1">3.6.1.-</ecNumber>
    </recommendedName>
</protein>
<dbReference type="EC" id="3.6.1.-" evidence="1"/>
<dbReference type="EMBL" id="CP000946">
    <property type="protein sequence ID" value="ACA79453.1"/>
    <property type="molecule type" value="Genomic_DNA"/>
</dbReference>
<dbReference type="RefSeq" id="WP_000041964.1">
    <property type="nucleotide sequence ID" value="NZ_MTFT01000012.1"/>
</dbReference>
<dbReference type="SMR" id="B1IT42"/>
<dbReference type="KEGG" id="ecl:EcolC_3849"/>
<dbReference type="HOGENOM" id="CLU_033617_2_0_6"/>
<dbReference type="GO" id="GO:0005737">
    <property type="term" value="C:cytoplasm"/>
    <property type="evidence" value="ECO:0007669"/>
    <property type="project" value="UniProtKB-SubCell"/>
</dbReference>
<dbReference type="GO" id="GO:0005525">
    <property type="term" value="F:GTP binding"/>
    <property type="evidence" value="ECO:0007669"/>
    <property type="project" value="UniProtKB-UniRule"/>
</dbReference>
<dbReference type="GO" id="GO:0003924">
    <property type="term" value="F:GTPase activity"/>
    <property type="evidence" value="ECO:0007669"/>
    <property type="project" value="UniProtKB-UniRule"/>
</dbReference>
<dbReference type="GO" id="GO:0046872">
    <property type="term" value="F:metal ion binding"/>
    <property type="evidence" value="ECO:0007669"/>
    <property type="project" value="UniProtKB-KW"/>
</dbReference>
<dbReference type="GO" id="GO:0019843">
    <property type="term" value="F:rRNA binding"/>
    <property type="evidence" value="ECO:0007669"/>
    <property type="project" value="UniProtKB-KW"/>
</dbReference>
<dbReference type="GO" id="GO:0042274">
    <property type="term" value="P:ribosomal small subunit biogenesis"/>
    <property type="evidence" value="ECO:0007669"/>
    <property type="project" value="UniProtKB-UniRule"/>
</dbReference>
<dbReference type="CDD" id="cd01854">
    <property type="entry name" value="YjeQ_EngC"/>
    <property type="match status" value="1"/>
</dbReference>
<dbReference type="FunFam" id="1.10.40.50:FF:000001">
    <property type="entry name" value="Small ribosomal subunit biogenesis GTPase RsgA"/>
    <property type="match status" value="1"/>
</dbReference>
<dbReference type="FunFam" id="2.40.50.140:FF:000122">
    <property type="entry name" value="Small ribosomal subunit biogenesis GTPase RsgA"/>
    <property type="match status" value="1"/>
</dbReference>
<dbReference type="FunFam" id="3.40.50.300:FF:000389">
    <property type="entry name" value="Small ribosomal subunit biogenesis GTPase RsgA"/>
    <property type="match status" value="1"/>
</dbReference>
<dbReference type="Gene3D" id="2.40.50.140">
    <property type="entry name" value="Nucleic acid-binding proteins"/>
    <property type="match status" value="1"/>
</dbReference>
<dbReference type="Gene3D" id="3.40.50.300">
    <property type="entry name" value="P-loop containing nucleotide triphosphate hydrolases"/>
    <property type="match status" value="1"/>
</dbReference>
<dbReference type="Gene3D" id="1.10.40.50">
    <property type="entry name" value="Probable gtpase engc, domain 3"/>
    <property type="match status" value="1"/>
</dbReference>
<dbReference type="HAMAP" id="MF_01820">
    <property type="entry name" value="GTPase_RsgA"/>
    <property type="match status" value="1"/>
</dbReference>
<dbReference type="InterPro" id="IPR030378">
    <property type="entry name" value="G_CP_dom"/>
</dbReference>
<dbReference type="InterPro" id="IPR012340">
    <property type="entry name" value="NA-bd_OB-fold"/>
</dbReference>
<dbReference type="InterPro" id="IPR027417">
    <property type="entry name" value="P-loop_NTPase"/>
</dbReference>
<dbReference type="InterPro" id="IPR004881">
    <property type="entry name" value="Ribosome_biogen_GTPase_RsgA"/>
</dbReference>
<dbReference type="InterPro" id="IPR010914">
    <property type="entry name" value="RsgA_GTPase_dom"/>
</dbReference>
<dbReference type="NCBIfam" id="NF008931">
    <property type="entry name" value="PRK12288.1"/>
    <property type="match status" value="1"/>
</dbReference>
<dbReference type="NCBIfam" id="TIGR00157">
    <property type="entry name" value="ribosome small subunit-dependent GTPase A"/>
    <property type="match status" value="1"/>
</dbReference>
<dbReference type="PANTHER" id="PTHR32120">
    <property type="entry name" value="SMALL RIBOSOMAL SUBUNIT BIOGENESIS GTPASE RSGA"/>
    <property type="match status" value="1"/>
</dbReference>
<dbReference type="PANTHER" id="PTHR32120:SF11">
    <property type="entry name" value="SMALL RIBOSOMAL SUBUNIT BIOGENESIS GTPASE RSGA 1, MITOCHONDRIAL-RELATED"/>
    <property type="match status" value="1"/>
</dbReference>
<dbReference type="Pfam" id="PF03193">
    <property type="entry name" value="RsgA_GTPase"/>
    <property type="match status" value="1"/>
</dbReference>
<dbReference type="SUPFAM" id="SSF52540">
    <property type="entry name" value="P-loop containing nucleoside triphosphate hydrolases"/>
    <property type="match status" value="1"/>
</dbReference>
<dbReference type="PROSITE" id="PS50936">
    <property type="entry name" value="ENGC_GTPASE"/>
    <property type="match status" value="1"/>
</dbReference>
<dbReference type="PROSITE" id="PS51721">
    <property type="entry name" value="G_CP"/>
    <property type="match status" value="1"/>
</dbReference>
<comment type="function">
    <text evidence="1">One of several proteins that assist in the late maturation steps of the functional core of the 30S ribosomal subunit. Helps release RbfA from mature subunits. May play a role in the assembly of ribosomal proteins into the subunit. Circularly permuted GTPase that catalyzes slow GTP hydrolysis, GTPase activity is stimulated by the 30S ribosomal subunit.</text>
</comment>
<comment type="cofactor">
    <cofactor evidence="1">
        <name>Zn(2+)</name>
        <dbReference type="ChEBI" id="CHEBI:29105"/>
    </cofactor>
    <text evidence="1">Binds 1 zinc ion per subunit.</text>
</comment>
<comment type="subunit">
    <text evidence="1">Monomer. Associates with 30S ribosomal subunit, binds 16S rRNA.</text>
</comment>
<comment type="subcellular location">
    <subcellularLocation>
        <location evidence="1">Cytoplasm</location>
    </subcellularLocation>
</comment>
<comment type="similarity">
    <text evidence="1">Belongs to the TRAFAC class YlqF/YawG GTPase family. RsgA subfamily.</text>
</comment>
<gene>
    <name evidence="1" type="primary">rsgA</name>
    <name type="ordered locus">EcolC_3849</name>
</gene>
<keyword id="KW-0963">Cytoplasm</keyword>
<keyword id="KW-0342">GTP-binding</keyword>
<keyword id="KW-0378">Hydrolase</keyword>
<keyword id="KW-0479">Metal-binding</keyword>
<keyword id="KW-0547">Nucleotide-binding</keyword>
<keyword id="KW-0690">Ribosome biogenesis</keyword>
<keyword id="KW-0694">RNA-binding</keyword>
<keyword id="KW-0699">rRNA-binding</keyword>
<keyword id="KW-0862">Zinc</keyword>
<evidence type="ECO:0000255" key="1">
    <source>
        <dbReference type="HAMAP-Rule" id="MF_01820"/>
    </source>
</evidence>
<evidence type="ECO:0000255" key="2">
    <source>
        <dbReference type="PROSITE-ProRule" id="PRU01058"/>
    </source>
</evidence>
<evidence type="ECO:0000256" key="3">
    <source>
        <dbReference type="SAM" id="MobiDB-lite"/>
    </source>
</evidence>
<sequence length="350" mass="39193">MSKNKLSKGQQRRVNANHQRRLKTSKEKPDYDDNLFGEPDEGIVISRFGMHADVESADGDVHRCNIRRTIRSLVTGDRVVWRPGKPAAEGVNVKGIVEAVHERTSVLTRPDFYDGVKPIAANIDQIVIVSAILPELSLNIIDRYLVACETLQIEPIIVLNKIDLLDDEGMAFVNEQMDIYRNIGYRVLMVSSHTQDGLKPLEEALTGRISIFAGQSGVGKSSLLNALLGLQKEILTNDISDNSGLGQHTTTAARLYHFPHGGDVIDSPGVREFGLWHLEPEQITQGFVEFHDYLGLCKYRDCKHDTDPGCAIREAVEEGKIAETRFENYHRILESMAQVKTRKNFSDTDD</sequence>
<reference key="1">
    <citation type="submission" date="2008-02" db="EMBL/GenBank/DDBJ databases">
        <title>Complete sequence of Escherichia coli C str. ATCC 8739.</title>
        <authorList>
            <person name="Copeland A."/>
            <person name="Lucas S."/>
            <person name="Lapidus A."/>
            <person name="Glavina del Rio T."/>
            <person name="Dalin E."/>
            <person name="Tice H."/>
            <person name="Bruce D."/>
            <person name="Goodwin L."/>
            <person name="Pitluck S."/>
            <person name="Kiss H."/>
            <person name="Brettin T."/>
            <person name="Detter J.C."/>
            <person name="Han C."/>
            <person name="Kuske C.R."/>
            <person name="Schmutz J."/>
            <person name="Larimer F."/>
            <person name="Land M."/>
            <person name="Hauser L."/>
            <person name="Kyrpides N."/>
            <person name="Mikhailova N."/>
            <person name="Ingram L."/>
            <person name="Richardson P."/>
        </authorList>
    </citation>
    <scope>NUCLEOTIDE SEQUENCE [LARGE SCALE GENOMIC DNA]</scope>
    <source>
        <strain>ATCC 8739 / DSM 1576 / NBRC 3972 / NCIMB 8545 / WDCM 00012 / Crooks</strain>
    </source>
</reference>
<accession>B1IT42</accession>
<name>RSGA_ECOLC</name>
<proteinExistence type="inferred from homology"/>
<feature type="chain" id="PRO_1000188071" description="Small ribosomal subunit biogenesis GTPase RsgA">
    <location>
        <begin position="1"/>
        <end position="350"/>
    </location>
</feature>
<feature type="domain" description="CP-type G" evidence="2">
    <location>
        <begin position="104"/>
        <end position="273"/>
    </location>
</feature>
<feature type="region of interest" description="Disordered" evidence="3">
    <location>
        <begin position="1"/>
        <end position="33"/>
    </location>
</feature>
<feature type="compositionally biased region" description="Polar residues" evidence="3">
    <location>
        <begin position="1"/>
        <end position="17"/>
    </location>
</feature>
<feature type="binding site" evidence="1">
    <location>
        <begin position="160"/>
        <end position="163"/>
    </location>
    <ligand>
        <name>GTP</name>
        <dbReference type="ChEBI" id="CHEBI:37565"/>
    </ligand>
</feature>
<feature type="binding site" evidence="1">
    <location>
        <begin position="214"/>
        <end position="222"/>
    </location>
    <ligand>
        <name>GTP</name>
        <dbReference type="ChEBI" id="CHEBI:37565"/>
    </ligand>
</feature>
<feature type="binding site" evidence="1">
    <location>
        <position position="297"/>
    </location>
    <ligand>
        <name>Zn(2+)</name>
        <dbReference type="ChEBI" id="CHEBI:29105"/>
    </ligand>
</feature>
<feature type="binding site" evidence="1">
    <location>
        <position position="302"/>
    </location>
    <ligand>
        <name>Zn(2+)</name>
        <dbReference type="ChEBI" id="CHEBI:29105"/>
    </ligand>
</feature>
<feature type="binding site" evidence="1">
    <location>
        <position position="304"/>
    </location>
    <ligand>
        <name>Zn(2+)</name>
        <dbReference type="ChEBI" id="CHEBI:29105"/>
    </ligand>
</feature>
<feature type="binding site" evidence="1">
    <location>
        <position position="310"/>
    </location>
    <ligand>
        <name>Zn(2+)</name>
        <dbReference type="ChEBI" id="CHEBI:29105"/>
    </ligand>
</feature>
<organism>
    <name type="scientific">Escherichia coli (strain ATCC 8739 / DSM 1576 / NBRC 3972 / NCIMB 8545 / WDCM 00012 / Crooks)</name>
    <dbReference type="NCBI Taxonomy" id="481805"/>
    <lineage>
        <taxon>Bacteria</taxon>
        <taxon>Pseudomonadati</taxon>
        <taxon>Pseudomonadota</taxon>
        <taxon>Gammaproteobacteria</taxon>
        <taxon>Enterobacterales</taxon>
        <taxon>Enterobacteriaceae</taxon>
        <taxon>Escherichia</taxon>
    </lineage>
</organism>